<protein>
    <recommendedName>
        <fullName>Hemoglobin subunit alpha-B</fullName>
    </recommendedName>
    <alternativeName>
        <fullName>Alpha-B-globin</fullName>
    </alternativeName>
    <alternativeName>
        <fullName>Hemoglobin alpha-B chain</fullName>
    </alternativeName>
</protein>
<feature type="initiator methionine" description="Removed" evidence="1">
    <location>
        <position position="1"/>
    </location>
</feature>
<feature type="chain" id="PRO_0000052747" description="Hemoglobin subunit alpha-B">
    <location>
        <begin position="2"/>
        <end position="142"/>
    </location>
</feature>
<feature type="domain" description="Globin" evidence="2">
    <location>
        <begin position="2"/>
        <end position="142"/>
    </location>
</feature>
<feature type="binding site">
    <location>
        <position position="59"/>
    </location>
    <ligand>
        <name>O2</name>
        <dbReference type="ChEBI" id="CHEBI:15379"/>
    </ligand>
</feature>
<feature type="binding site" description="proximal binding residue">
    <location>
        <position position="88"/>
    </location>
    <ligand>
        <name>heme b</name>
        <dbReference type="ChEBI" id="CHEBI:60344"/>
    </ligand>
    <ligandPart>
        <name>Fe</name>
        <dbReference type="ChEBI" id="CHEBI:18248"/>
    </ligandPart>
</feature>
<dbReference type="EMBL" id="M63797">
    <property type="protein sequence ID" value="AAA64301.1"/>
    <property type="molecule type" value="mRNA"/>
</dbReference>
<dbReference type="PIR" id="A49296">
    <property type="entry name" value="A49296"/>
</dbReference>
<dbReference type="SMR" id="P51465"/>
<dbReference type="OrthoDB" id="8751793at2759"/>
<dbReference type="GO" id="GO:0072562">
    <property type="term" value="C:blood microparticle"/>
    <property type="evidence" value="ECO:0007669"/>
    <property type="project" value="TreeGrafter"/>
</dbReference>
<dbReference type="GO" id="GO:0031838">
    <property type="term" value="C:haptoglobin-hemoglobin complex"/>
    <property type="evidence" value="ECO:0007669"/>
    <property type="project" value="TreeGrafter"/>
</dbReference>
<dbReference type="GO" id="GO:0005833">
    <property type="term" value="C:hemoglobin complex"/>
    <property type="evidence" value="ECO:0007669"/>
    <property type="project" value="InterPro"/>
</dbReference>
<dbReference type="GO" id="GO:0031720">
    <property type="term" value="F:haptoglobin binding"/>
    <property type="evidence" value="ECO:0007669"/>
    <property type="project" value="TreeGrafter"/>
</dbReference>
<dbReference type="GO" id="GO:0020037">
    <property type="term" value="F:heme binding"/>
    <property type="evidence" value="ECO:0007669"/>
    <property type="project" value="InterPro"/>
</dbReference>
<dbReference type="GO" id="GO:0046872">
    <property type="term" value="F:metal ion binding"/>
    <property type="evidence" value="ECO:0007669"/>
    <property type="project" value="UniProtKB-KW"/>
</dbReference>
<dbReference type="GO" id="GO:0043177">
    <property type="term" value="F:organic acid binding"/>
    <property type="evidence" value="ECO:0007669"/>
    <property type="project" value="TreeGrafter"/>
</dbReference>
<dbReference type="GO" id="GO:0019825">
    <property type="term" value="F:oxygen binding"/>
    <property type="evidence" value="ECO:0007669"/>
    <property type="project" value="InterPro"/>
</dbReference>
<dbReference type="GO" id="GO:0005344">
    <property type="term" value="F:oxygen carrier activity"/>
    <property type="evidence" value="ECO:0007669"/>
    <property type="project" value="UniProtKB-KW"/>
</dbReference>
<dbReference type="GO" id="GO:0004601">
    <property type="term" value="F:peroxidase activity"/>
    <property type="evidence" value="ECO:0007669"/>
    <property type="project" value="TreeGrafter"/>
</dbReference>
<dbReference type="GO" id="GO:0042744">
    <property type="term" value="P:hydrogen peroxide catabolic process"/>
    <property type="evidence" value="ECO:0007669"/>
    <property type="project" value="TreeGrafter"/>
</dbReference>
<dbReference type="CDD" id="cd08927">
    <property type="entry name" value="Hb-alpha-like"/>
    <property type="match status" value="1"/>
</dbReference>
<dbReference type="FunFam" id="1.10.490.10:FF:000002">
    <property type="entry name" value="Hemoglobin subunit alpha"/>
    <property type="match status" value="1"/>
</dbReference>
<dbReference type="Gene3D" id="1.10.490.10">
    <property type="entry name" value="Globins"/>
    <property type="match status" value="1"/>
</dbReference>
<dbReference type="InterPro" id="IPR000971">
    <property type="entry name" value="Globin"/>
</dbReference>
<dbReference type="InterPro" id="IPR009050">
    <property type="entry name" value="Globin-like_sf"/>
</dbReference>
<dbReference type="InterPro" id="IPR012292">
    <property type="entry name" value="Globin/Proto"/>
</dbReference>
<dbReference type="InterPro" id="IPR002338">
    <property type="entry name" value="Hemoglobin_a-typ"/>
</dbReference>
<dbReference type="InterPro" id="IPR050056">
    <property type="entry name" value="Hemoglobin_oxygen_transport"/>
</dbReference>
<dbReference type="PANTHER" id="PTHR11442">
    <property type="entry name" value="HEMOGLOBIN FAMILY MEMBER"/>
    <property type="match status" value="1"/>
</dbReference>
<dbReference type="PANTHER" id="PTHR11442:SF41">
    <property type="entry name" value="HEMOGLOBIN SUBUNIT ZETA"/>
    <property type="match status" value="1"/>
</dbReference>
<dbReference type="Pfam" id="PF00042">
    <property type="entry name" value="Globin"/>
    <property type="match status" value="1"/>
</dbReference>
<dbReference type="PRINTS" id="PR00612">
    <property type="entry name" value="ALPHAHAEM"/>
</dbReference>
<dbReference type="SUPFAM" id="SSF46458">
    <property type="entry name" value="Globin-like"/>
    <property type="match status" value="1"/>
</dbReference>
<dbReference type="PROSITE" id="PS01033">
    <property type="entry name" value="GLOBIN"/>
    <property type="match status" value="1"/>
</dbReference>
<sequence>MPFSASDRHDITHLWEKMAPNVEFLGEEAMERLFKSHPKTKTYFSHLNVEHGSAAVRAQGAKVLNAIGHASKNLDHLDEALSNLSDKHAHDLRVDPGNFHLLCHNILVVLAIHFPEDFTPRAHAAFDKFLAAVSETLYSKYR</sequence>
<name>HBAB_AQUCT</name>
<organism>
    <name type="scientific">Aquarana catesbeiana</name>
    <name type="common">American bullfrog</name>
    <name type="synonym">Rana catesbeiana</name>
    <dbReference type="NCBI Taxonomy" id="8400"/>
    <lineage>
        <taxon>Eukaryota</taxon>
        <taxon>Metazoa</taxon>
        <taxon>Chordata</taxon>
        <taxon>Craniata</taxon>
        <taxon>Vertebrata</taxon>
        <taxon>Euteleostomi</taxon>
        <taxon>Amphibia</taxon>
        <taxon>Batrachia</taxon>
        <taxon>Anura</taxon>
        <taxon>Neobatrachia</taxon>
        <taxon>Ranoidea</taxon>
        <taxon>Ranidae</taxon>
        <taxon>Aquarana</taxon>
    </lineage>
</organism>
<proteinExistence type="evidence at protein level"/>
<accession>P51465</accession>
<comment type="function">
    <text>The alpha-B chain is a component of adult hemoglobin B.</text>
</comment>
<comment type="subunit">
    <text>Heterotetramer of either two alpha-B chains or two alpha-C chains and two beta chains. The two major hemoglobins, B and C, associate upon deoxygenation to form a trimer of tetramers, BC2, that has a much lower affinity for oxygen than either component alone.</text>
</comment>
<comment type="tissue specificity">
    <text>Red blood cells.</text>
</comment>
<comment type="similarity">
    <text evidence="2">Belongs to the globin family.</text>
</comment>
<reference key="1">
    <citation type="journal article" date="1993" name="J. Biol. Chem.">
        <title>The hemoglobins of the bullfrog, Rana catesbeiana. The cDNA-derived amino acid sequences of the alpha chains of adult hemoglobins B and C: their roles in deoxygenation-induced aggregation.</title>
        <authorList>
            <person name="Smith D.J."/>
            <person name="Zhu H."/>
            <person name="Kolatkar P.R."/>
            <person name="Tam L.-T."/>
            <person name="Baldwin T.O."/>
            <person name="Roe B.A."/>
            <person name="Broyles R.H."/>
            <person name="Riggs A.F."/>
        </authorList>
    </citation>
    <scope>NUCLEOTIDE SEQUENCE [MRNA]</scope>
    <scope>PARTIAL PROTEIN SEQUENCE</scope>
    <source>
        <strain>Shaw</strain>
        <tissue>Erythroid cell</tissue>
    </source>
</reference>
<evidence type="ECO:0000250" key="1"/>
<evidence type="ECO:0000255" key="2">
    <source>
        <dbReference type="PROSITE-ProRule" id="PRU00238"/>
    </source>
</evidence>
<keyword id="KW-0903">Direct protein sequencing</keyword>
<keyword id="KW-0349">Heme</keyword>
<keyword id="KW-0408">Iron</keyword>
<keyword id="KW-0479">Metal-binding</keyword>
<keyword id="KW-0561">Oxygen transport</keyword>
<keyword id="KW-0813">Transport</keyword>